<proteinExistence type="predicted"/>
<organism>
    <name type="scientific">Kluyveromyces lactis (strain ATCC 8585 / CBS 2359 / DSM 70799 / NBRC 1267 / NRRL Y-1140 / WM37)</name>
    <name type="common">Yeast</name>
    <name type="synonym">Candida sphaerica</name>
    <dbReference type="NCBI Taxonomy" id="284590"/>
    <lineage>
        <taxon>Eukaryota</taxon>
        <taxon>Fungi</taxon>
        <taxon>Dikarya</taxon>
        <taxon>Ascomycota</taxon>
        <taxon>Saccharomycotina</taxon>
        <taxon>Saccharomycetes</taxon>
        <taxon>Saccharomycetales</taxon>
        <taxon>Saccharomycetaceae</taxon>
        <taxon>Kluyveromyces</taxon>
    </lineage>
</organism>
<keyword id="KW-0614">Plasmid</keyword>
<geneLocation type="plasmid">
    <name>pGKl-2</name>
</geneLocation>
<sequence>MLLYLNSTLCSIISIMYKITNVSFVEYYSNNVSKDVIYSYLMNSTCSNKGTIKLNLESGKRLKQEGPYILPPIRWLDSFEKNAEFTILCEVDDIK</sequence>
<protein>
    <recommendedName>
        <fullName>Uncharacterized killer plasmid pGKl-2 protein 8</fullName>
    </recommendedName>
</protein>
<accession>P05474</accession>
<dbReference type="EMBL" id="X07776">
    <property type="protein sequence ID" value="CAA30610.1"/>
    <property type="molecule type" value="Genomic_DNA"/>
</dbReference>
<dbReference type="PIR" id="S00966">
    <property type="entry name" value="S00966"/>
</dbReference>
<dbReference type="PaxDb" id="284590-P05474"/>
<dbReference type="InParanoid" id="P05474"/>
<dbReference type="InterPro" id="IPR020120">
    <property type="entry name" value="Plasmid_pGKL2_Orf8"/>
</dbReference>
<dbReference type="Pfam" id="PF17568">
    <property type="entry name" value="DUF5474"/>
    <property type="match status" value="1"/>
</dbReference>
<name>YKP8_KLULA</name>
<comment type="function">
    <text>The presence of the two linear plasmids, termed pGKL1 and pGKL2, in strains of Kluyveromyces lactis confers the killer phenotype to the host cell, by promoting the secretion of a toxin able to inhibit the growth of sensitive strains.</text>
</comment>
<reference key="1">
    <citation type="journal article" date="1988" name="Nucleic Acids Res.">
        <title>Genome organization of the killer plasmid pGKL2 from Kluyveromyces lactis.</title>
        <authorList>
            <person name="Tommasino M."/>
            <person name="Ricci S."/>
            <person name="Galeotti C.L."/>
        </authorList>
    </citation>
    <scope>NUCLEOTIDE SEQUENCE [GENOMIC DNA]</scope>
    <source>
        <strain>ATCC 8585 / CBS 2359 / DSM 70799 / NBRC 1267 / NRRL Y-1140 / WM37</strain>
    </source>
</reference>
<feature type="chain" id="PRO_0000066281" description="Uncharacterized killer plasmid pGKl-2 protein 8">
    <location>
        <begin position="1"/>
        <end position="95"/>
    </location>
</feature>